<keyword id="KW-1185">Reference proteome</keyword>
<feature type="chain" id="PRO_0000384453" description="Protein sigN132">
    <location>
        <begin position="1"/>
        <end position="76"/>
    </location>
</feature>
<feature type="region of interest" description="Disordered" evidence="1">
    <location>
        <begin position="1"/>
        <end position="33"/>
    </location>
</feature>
<feature type="compositionally biased region" description="Polar residues" evidence="1">
    <location>
        <begin position="1"/>
        <end position="13"/>
    </location>
</feature>
<feature type="compositionally biased region" description="Low complexity" evidence="1">
    <location>
        <begin position="14"/>
        <end position="33"/>
    </location>
</feature>
<gene>
    <name type="ORF">DDB_G0271934</name>
</gene>
<protein>
    <recommendedName>
        <fullName>Protein sigN132</fullName>
    </recommendedName>
    <alternativeName>
        <fullName>SrfA-induced gene N-like protein 132</fullName>
    </alternativeName>
</protein>
<organism>
    <name type="scientific">Dictyostelium discoideum</name>
    <name type="common">Social amoeba</name>
    <dbReference type="NCBI Taxonomy" id="44689"/>
    <lineage>
        <taxon>Eukaryota</taxon>
        <taxon>Amoebozoa</taxon>
        <taxon>Evosea</taxon>
        <taxon>Eumycetozoa</taxon>
        <taxon>Dictyostelia</taxon>
        <taxon>Dictyosteliales</taxon>
        <taxon>Dictyosteliaceae</taxon>
        <taxon>Dictyostelium</taxon>
    </lineage>
</organism>
<accession>Q55AF0</accession>
<accession>Q86I86</accession>
<name>SI132_DICDI</name>
<proteinExistence type="predicted"/>
<evidence type="ECO:0000256" key="1">
    <source>
        <dbReference type="SAM" id="MobiDB-lite"/>
    </source>
</evidence>
<sequence>MLFESISTLSNLKSASKSSMIASTGSTSSKSSNSIQCYTGCVGGGIFPIRQTSINIDINISISRGCGSCGGCACRY</sequence>
<reference key="1">
    <citation type="journal article" date="2002" name="Nature">
        <title>Sequence and analysis of chromosome 2 of Dictyostelium discoideum.</title>
        <authorList>
            <person name="Gloeckner G."/>
            <person name="Eichinger L."/>
            <person name="Szafranski K."/>
            <person name="Pachebat J.A."/>
            <person name="Bankier A.T."/>
            <person name="Dear P.H."/>
            <person name="Lehmann R."/>
            <person name="Baumgart C."/>
            <person name="Parra G."/>
            <person name="Abril J.F."/>
            <person name="Guigo R."/>
            <person name="Kumpf K."/>
            <person name="Tunggal B."/>
            <person name="Cox E.C."/>
            <person name="Quail M.A."/>
            <person name="Platzer M."/>
            <person name="Rosenthal A."/>
            <person name="Noegel A.A."/>
        </authorList>
    </citation>
    <scope>NUCLEOTIDE SEQUENCE [LARGE SCALE GENOMIC DNA]</scope>
    <source>
        <strain>AX4</strain>
    </source>
</reference>
<reference key="2">
    <citation type="journal article" date="2005" name="Nature">
        <title>The genome of the social amoeba Dictyostelium discoideum.</title>
        <authorList>
            <person name="Eichinger L."/>
            <person name="Pachebat J.A."/>
            <person name="Gloeckner G."/>
            <person name="Rajandream M.A."/>
            <person name="Sucgang R."/>
            <person name="Berriman M."/>
            <person name="Song J."/>
            <person name="Olsen R."/>
            <person name="Szafranski K."/>
            <person name="Xu Q."/>
            <person name="Tunggal B."/>
            <person name="Kummerfeld S."/>
            <person name="Madera M."/>
            <person name="Konfortov B.A."/>
            <person name="Rivero F."/>
            <person name="Bankier A.T."/>
            <person name="Lehmann R."/>
            <person name="Hamlin N."/>
            <person name="Davies R."/>
            <person name="Gaudet P."/>
            <person name="Fey P."/>
            <person name="Pilcher K."/>
            <person name="Chen G."/>
            <person name="Saunders D."/>
            <person name="Sodergren E.J."/>
            <person name="Davis P."/>
            <person name="Kerhornou A."/>
            <person name="Nie X."/>
            <person name="Hall N."/>
            <person name="Anjard C."/>
            <person name="Hemphill L."/>
            <person name="Bason N."/>
            <person name="Farbrother P."/>
            <person name="Desany B."/>
            <person name="Just E."/>
            <person name="Morio T."/>
            <person name="Rost R."/>
            <person name="Churcher C.M."/>
            <person name="Cooper J."/>
            <person name="Haydock S."/>
            <person name="van Driessche N."/>
            <person name="Cronin A."/>
            <person name="Goodhead I."/>
            <person name="Muzny D.M."/>
            <person name="Mourier T."/>
            <person name="Pain A."/>
            <person name="Lu M."/>
            <person name="Harper D."/>
            <person name="Lindsay R."/>
            <person name="Hauser H."/>
            <person name="James K.D."/>
            <person name="Quiles M."/>
            <person name="Madan Babu M."/>
            <person name="Saito T."/>
            <person name="Buchrieser C."/>
            <person name="Wardroper A."/>
            <person name="Felder M."/>
            <person name="Thangavelu M."/>
            <person name="Johnson D."/>
            <person name="Knights A."/>
            <person name="Loulseged H."/>
            <person name="Mungall K.L."/>
            <person name="Oliver K."/>
            <person name="Price C."/>
            <person name="Quail M.A."/>
            <person name="Urushihara H."/>
            <person name="Hernandez J."/>
            <person name="Rabbinowitsch E."/>
            <person name="Steffen D."/>
            <person name="Sanders M."/>
            <person name="Ma J."/>
            <person name="Kohara Y."/>
            <person name="Sharp S."/>
            <person name="Simmonds M.N."/>
            <person name="Spiegler S."/>
            <person name="Tivey A."/>
            <person name="Sugano S."/>
            <person name="White B."/>
            <person name="Walker D."/>
            <person name="Woodward J.R."/>
            <person name="Winckler T."/>
            <person name="Tanaka Y."/>
            <person name="Shaulsky G."/>
            <person name="Schleicher M."/>
            <person name="Weinstock G.M."/>
            <person name="Rosenthal A."/>
            <person name="Cox E.C."/>
            <person name="Chisholm R.L."/>
            <person name="Gibbs R.A."/>
            <person name="Loomis W.F."/>
            <person name="Platzer M."/>
            <person name="Kay R.R."/>
            <person name="Williams J.G."/>
            <person name="Dear P.H."/>
            <person name="Noegel A.A."/>
            <person name="Barrell B.G."/>
            <person name="Kuspa A."/>
        </authorList>
    </citation>
    <scope>NUCLEOTIDE SEQUENCE [LARGE SCALE GENOMIC DNA]</scope>
    <source>
        <strain>AX4</strain>
    </source>
</reference>
<reference key="3">
    <citation type="journal article" date="2008" name="BMC Microbiol.">
        <title>Structural and functional studies of a family of Dictyostelium discoideum developmentally regulated, prestalk genes coding for small proteins.</title>
        <authorList>
            <person name="Vicente J.J."/>
            <person name="Galardi-Castilla M."/>
            <person name="Escalante R."/>
            <person name="Sastre L."/>
        </authorList>
    </citation>
    <scope>IDENTIFICATION</scope>
</reference>
<dbReference type="EMBL" id="AAFI02000007">
    <property type="protein sequence ID" value="EAL71491.1"/>
    <property type="molecule type" value="Genomic_DNA"/>
</dbReference>
<dbReference type="RefSeq" id="XP_645404.1">
    <property type="nucleotide sequence ID" value="XM_640312.1"/>
</dbReference>
<dbReference type="PaxDb" id="44689-DDB0266543"/>
<dbReference type="EnsemblProtists" id="EAL71491">
    <property type="protein sequence ID" value="EAL71491"/>
    <property type="gene ID" value="DDB_G0271934"/>
</dbReference>
<dbReference type="GeneID" id="8618216"/>
<dbReference type="KEGG" id="ddi:DDB_G0271934"/>
<dbReference type="dictyBase" id="DDB_G0271934"/>
<dbReference type="HOGENOM" id="CLU_2659711_0_0_1"/>
<dbReference type="InParanoid" id="Q55AF0"/>
<dbReference type="PRO" id="PR:Q55AF0"/>
<dbReference type="Proteomes" id="UP000002195">
    <property type="component" value="Chromosome 2"/>
</dbReference>
<dbReference type="InterPro" id="IPR008455">
    <property type="entry name" value="HssA/B-related"/>
</dbReference>
<dbReference type="Pfam" id="PF05710">
    <property type="entry name" value="Coiled"/>
    <property type="match status" value="1"/>
</dbReference>